<protein>
    <recommendedName>
        <fullName evidence="2">Photosystem II D2 protein</fullName>
        <shortName evidence="2">PSII D2 protein</shortName>
        <ecNumber evidence="2">1.10.3.9</ecNumber>
    </recommendedName>
    <alternativeName>
        <fullName evidence="2">Photosystem Q(A) protein</fullName>
    </alternativeName>
</protein>
<organism>
    <name type="scientific">Antirrhinum majus</name>
    <name type="common">Garden snapdragon</name>
    <dbReference type="NCBI Taxonomy" id="4151"/>
    <lineage>
        <taxon>Eukaryota</taxon>
        <taxon>Viridiplantae</taxon>
        <taxon>Streptophyta</taxon>
        <taxon>Embryophyta</taxon>
        <taxon>Tracheophyta</taxon>
        <taxon>Spermatophyta</taxon>
        <taxon>Magnoliopsida</taxon>
        <taxon>eudicotyledons</taxon>
        <taxon>Gunneridae</taxon>
        <taxon>Pentapetalae</taxon>
        <taxon>asterids</taxon>
        <taxon>lamiids</taxon>
        <taxon>Lamiales</taxon>
        <taxon>Plantaginaceae</taxon>
        <taxon>Antirrhineae</taxon>
        <taxon>Antirrhinum</taxon>
    </lineage>
</organism>
<reference key="1">
    <citation type="submission" date="1995-02" db="EMBL/GenBank/DDBJ databases">
        <authorList>
            <person name="Schaffner C."/>
            <person name="Lausch H."/>
            <person name="Hagemann R."/>
        </authorList>
    </citation>
    <scope>NUCLEOTIDE SEQUENCE [GENOMIC DNA]</scope>
    <scope>MUTAGENESIS OF PRO-343</scope>
    <source>
        <strain>cv. SO</strain>
        <tissue>Leaf</tissue>
    </source>
</reference>
<comment type="function">
    <text evidence="2">Photosystem II (PSII) is a light-driven water:plastoquinone oxidoreductase that uses light energy to abstract electrons from H(2)O, generating O(2) and a proton gradient subsequently used for ATP formation. It consists of a core antenna complex that captures photons, and an electron transfer chain that converts photonic excitation into a charge separation. The D1/D2 (PsbA/PsbD) reaction center heterodimer binds P680, the primary electron donor of PSII as well as several subsequent electron acceptors. D2 is needed for assembly of a stable PSII complex.</text>
</comment>
<comment type="catalytic activity">
    <reaction evidence="2">
        <text>2 a plastoquinone + 4 hnu + 2 H2O = 2 a plastoquinol + O2</text>
        <dbReference type="Rhea" id="RHEA:36359"/>
        <dbReference type="Rhea" id="RHEA-COMP:9561"/>
        <dbReference type="Rhea" id="RHEA-COMP:9562"/>
        <dbReference type="ChEBI" id="CHEBI:15377"/>
        <dbReference type="ChEBI" id="CHEBI:15379"/>
        <dbReference type="ChEBI" id="CHEBI:17757"/>
        <dbReference type="ChEBI" id="CHEBI:30212"/>
        <dbReference type="ChEBI" id="CHEBI:62192"/>
        <dbReference type="EC" id="1.10.3.9"/>
    </reaction>
</comment>
<comment type="cofactor">
    <text evidence="2">The D1/D2 heterodimer binds P680, chlorophylls that are the primary electron donor of PSII, and subsequent electron acceptors. It shares a non-heme iron and each subunit binds pheophytin, quinone, additional chlorophylls, carotenoids and lipids. There is also a Cl(-1) ion associated with D1 and D2, which is required for oxygen evolution. The PSII complex binds additional chlorophylls, carotenoids and specific lipids.</text>
</comment>
<comment type="subunit">
    <text evidence="2">PSII is composed of 1 copy each of membrane proteins PsbA, PsbB, PsbC, PsbD, PsbE, PsbF, PsbH, PsbI, PsbJ, PsbK, PsbL, PsbM, PsbT, PsbX, PsbY, PsbZ, Psb30/Ycf12, at least 3 peripheral proteins of the oxygen-evolving complex and a large number of cofactors. It forms dimeric complexes.</text>
</comment>
<comment type="subcellular location">
    <subcellularLocation>
        <location evidence="2">Plastid</location>
        <location evidence="2">Chloroplast thylakoid membrane</location>
        <topology evidence="2">Multi-pass membrane protein</topology>
    </subcellularLocation>
</comment>
<comment type="miscellaneous">
    <text evidence="2">2 of the reaction center chlorophylls (ChlD1 and ChlD2) are entirely coordinated by water.</text>
</comment>
<comment type="similarity">
    <text evidence="2">Belongs to the reaction center PufL/M/PsbA/D family.</text>
</comment>
<geneLocation type="chloroplast"/>
<name>PSBD_ANTMA</name>
<keyword id="KW-0007">Acetylation</keyword>
<keyword id="KW-0148">Chlorophyll</keyword>
<keyword id="KW-0150">Chloroplast</keyword>
<keyword id="KW-0157">Chromophore</keyword>
<keyword id="KW-0249">Electron transport</keyword>
<keyword id="KW-0408">Iron</keyword>
<keyword id="KW-0460">Magnesium</keyword>
<keyword id="KW-0472">Membrane</keyword>
<keyword id="KW-0479">Metal-binding</keyword>
<keyword id="KW-0560">Oxidoreductase</keyword>
<keyword id="KW-0597">Phosphoprotein</keyword>
<keyword id="KW-0602">Photosynthesis</keyword>
<keyword id="KW-0604">Photosystem II</keyword>
<keyword id="KW-0934">Plastid</keyword>
<keyword id="KW-0793">Thylakoid</keyword>
<keyword id="KW-0812">Transmembrane</keyword>
<keyword id="KW-1133">Transmembrane helix</keyword>
<keyword id="KW-0813">Transport</keyword>
<feature type="initiator methionine" description="Removed" evidence="1">
    <location>
        <position position="1"/>
    </location>
</feature>
<feature type="chain" id="PRO_0000090497" description="Photosystem II D2 protein">
    <location>
        <begin position="2"/>
        <end position="353"/>
    </location>
</feature>
<feature type="transmembrane region" description="Helical" evidence="2">
    <location>
        <begin position="41"/>
        <end position="61"/>
    </location>
</feature>
<feature type="transmembrane region" description="Helical" evidence="2">
    <location>
        <begin position="125"/>
        <end position="141"/>
    </location>
</feature>
<feature type="transmembrane region" description="Helical" evidence="2">
    <location>
        <begin position="153"/>
        <end position="166"/>
    </location>
</feature>
<feature type="transmembrane region" description="Helical" evidence="2">
    <location>
        <begin position="208"/>
        <end position="228"/>
    </location>
</feature>
<feature type="transmembrane region" description="Helical" evidence="2">
    <location>
        <begin position="279"/>
        <end position="295"/>
    </location>
</feature>
<feature type="binding site" description="axial binding residue" evidence="2">
    <location>
        <position position="118"/>
    </location>
    <ligand>
        <name>chlorophyll a</name>
        <dbReference type="ChEBI" id="CHEBI:58416"/>
        <label>ChlzD2</label>
    </ligand>
    <ligandPart>
        <name>Mg</name>
        <dbReference type="ChEBI" id="CHEBI:25107"/>
    </ligandPart>
</feature>
<feature type="binding site" evidence="2">
    <location>
        <position position="130"/>
    </location>
    <ligand>
        <name>pheophytin a</name>
        <dbReference type="ChEBI" id="CHEBI:136840"/>
        <label>D2</label>
    </ligand>
</feature>
<feature type="binding site" evidence="2">
    <location>
        <position position="143"/>
    </location>
    <ligand>
        <name>pheophytin a</name>
        <dbReference type="ChEBI" id="CHEBI:136840"/>
        <label>D2</label>
    </ligand>
</feature>
<feature type="binding site" description="axial binding residue" evidence="2">
    <location>
        <position position="198"/>
    </location>
    <ligand>
        <name>chlorophyll a</name>
        <dbReference type="ChEBI" id="CHEBI:58416"/>
        <label>PD2</label>
    </ligand>
    <ligandPart>
        <name>Mg</name>
        <dbReference type="ChEBI" id="CHEBI:25107"/>
    </ligandPart>
</feature>
<feature type="binding site" evidence="2">
    <location>
        <position position="215"/>
    </location>
    <ligand>
        <name>a plastoquinone</name>
        <dbReference type="ChEBI" id="CHEBI:17757"/>
        <label>Q(A)</label>
    </ligand>
</feature>
<feature type="binding site" evidence="2">
    <location>
        <position position="215"/>
    </location>
    <ligand>
        <name>Fe cation</name>
        <dbReference type="ChEBI" id="CHEBI:24875"/>
        <note>ligand shared with heterodimeric partner</note>
    </ligand>
</feature>
<feature type="binding site" evidence="2">
    <location>
        <position position="262"/>
    </location>
    <ligand>
        <name>a plastoquinone</name>
        <dbReference type="ChEBI" id="CHEBI:17757"/>
        <label>Q(A)</label>
    </ligand>
</feature>
<feature type="binding site" evidence="2">
    <location>
        <position position="269"/>
    </location>
    <ligand>
        <name>Fe cation</name>
        <dbReference type="ChEBI" id="CHEBI:24875"/>
        <note>ligand shared with heterodimeric partner</note>
    </ligand>
</feature>
<feature type="modified residue" description="N-acetylthreonine" evidence="1">
    <location>
        <position position="2"/>
    </location>
</feature>
<feature type="modified residue" description="Phosphothreonine" evidence="1">
    <location>
        <position position="2"/>
    </location>
</feature>
<feature type="mutagenesis site" description="In Alba-4; loss of activity." evidence="3">
    <original>P</original>
    <variation>S</variation>
    <location>
        <position position="343"/>
    </location>
</feature>
<sequence>MTIALGKFTKDENDLFDIMDDWLRRDRFVFVGWSGLLLFPCAYFAVGGWFTGTTFVTSWYTHGLASSYLEGCNFLTAAVSTPANSLAHSLLLLWGPEAQGDFTRWCQLGGLWTFVALHGAFGLIGFMLRQFELARSVQLRPYNAIAFSGPIAVFVSVFLIYPLGQSGWFFAPSFGVAAIFRFILFFQGFHNWTLNPFHMMGVAGVLGAALLCAIHGATVENTLFEDGDGANTFRAFNPTQAEETYSMVTANRFWSQIFGVAFSNKRWLHFFMLFVPVTGLWMSALGVVGLALNLRAYDFVSQEIRAAEDPEFETFYTKNILLNEGIRAWMAAQDQPHENLIFPEEVLPRGNAL</sequence>
<gene>
    <name evidence="2" type="primary">psbD</name>
</gene>
<accession>P69685</accession>
<accession>P06403</accession>
<accession>Q33333</accession>
<dbReference type="EC" id="1.10.3.9" evidence="2"/>
<dbReference type="EMBL" id="X84154">
    <property type="protein sequence ID" value="CAA58959.1"/>
    <property type="molecule type" value="Genomic_DNA"/>
</dbReference>
<dbReference type="EMBL" id="X84155">
    <property type="protein sequence ID" value="CAA58960.1"/>
    <property type="molecule type" value="Genomic_DNA"/>
</dbReference>
<dbReference type="PIR" id="S52396">
    <property type="entry name" value="S52396"/>
</dbReference>
<dbReference type="PIR" id="S52397">
    <property type="entry name" value="S52397"/>
</dbReference>
<dbReference type="SMR" id="P69685"/>
<dbReference type="GO" id="GO:0009535">
    <property type="term" value="C:chloroplast thylakoid membrane"/>
    <property type="evidence" value="ECO:0007669"/>
    <property type="project" value="UniProtKB-SubCell"/>
</dbReference>
<dbReference type="GO" id="GO:0009523">
    <property type="term" value="C:photosystem II"/>
    <property type="evidence" value="ECO:0007669"/>
    <property type="project" value="UniProtKB-KW"/>
</dbReference>
<dbReference type="GO" id="GO:0016168">
    <property type="term" value="F:chlorophyll binding"/>
    <property type="evidence" value="ECO:0007669"/>
    <property type="project" value="UniProtKB-UniRule"/>
</dbReference>
<dbReference type="GO" id="GO:0045156">
    <property type="term" value="F:electron transporter, transferring electrons within the cyclic electron transport pathway of photosynthesis activity"/>
    <property type="evidence" value="ECO:0007669"/>
    <property type="project" value="InterPro"/>
</dbReference>
<dbReference type="GO" id="GO:0005506">
    <property type="term" value="F:iron ion binding"/>
    <property type="evidence" value="ECO:0007669"/>
    <property type="project" value="UniProtKB-UniRule"/>
</dbReference>
<dbReference type="GO" id="GO:0010242">
    <property type="term" value="F:oxygen evolving activity"/>
    <property type="evidence" value="ECO:0007669"/>
    <property type="project" value="UniProtKB-EC"/>
</dbReference>
<dbReference type="GO" id="GO:0009772">
    <property type="term" value="P:photosynthetic electron transport in photosystem II"/>
    <property type="evidence" value="ECO:0007669"/>
    <property type="project" value="InterPro"/>
</dbReference>
<dbReference type="CDD" id="cd09288">
    <property type="entry name" value="Photosystem-II_D2"/>
    <property type="match status" value="1"/>
</dbReference>
<dbReference type="FunFam" id="1.20.85.10:FF:000001">
    <property type="entry name" value="photosystem II D2 protein-like"/>
    <property type="match status" value="1"/>
</dbReference>
<dbReference type="Gene3D" id="1.20.85.10">
    <property type="entry name" value="Photosystem II protein D1-like"/>
    <property type="match status" value="1"/>
</dbReference>
<dbReference type="HAMAP" id="MF_01383">
    <property type="entry name" value="PSII_PsbD_D2"/>
    <property type="match status" value="1"/>
</dbReference>
<dbReference type="InterPro" id="IPR055266">
    <property type="entry name" value="D1/D2"/>
</dbReference>
<dbReference type="InterPro" id="IPR036854">
    <property type="entry name" value="Photo_II_D1/D2_sf"/>
</dbReference>
<dbReference type="InterPro" id="IPR000484">
    <property type="entry name" value="Photo_RC_L/M"/>
</dbReference>
<dbReference type="InterPro" id="IPR055265">
    <property type="entry name" value="Photo_RC_L/M_CS"/>
</dbReference>
<dbReference type="InterPro" id="IPR005868">
    <property type="entry name" value="PSII_PsbD/D2"/>
</dbReference>
<dbReference type="NCBIfam" id="TIGR01152">
    <property type="entry name" value="psbD"/>
    <property type="match status" value="1"/>
</dbReference>
<dbReference type="PANTHER" id="PTHR33149:SF12">
    <property type="entry name" value="PHOTOSYSTEM II D2 PROTEIN"/>
    <property type="match status" value="1"/>
</dbReference>
<dbReference type="PANTHER" id="PTHR33149">
    <property type="entry name" value="PHOTOSYSTEM II PROTEIN D1"/>
    <property type="match status" value="1"/>
</dbReference>
<dbReference type="Pfam" id="PF00124">
    <property type="entry name" value="Photo_RC"/>
    <property type="match status" value="1"/>
</dbReference>
<dbReference type="PRINTS" id="PR00256">
    <property type="entry name" value="REACTNCENTRE"/>
</dbReference>
<dbReference type="SUPFAM" id="SSF81483">
    <property type="entry name" value="Bacterial photosystem II reaction centre, L and M subunits"/>
    <property type="match status" value="1"/>
</dbReference>
<dbReference type="PROSITE" id="PS00244">
    <property type="entry name" value="REACTION_CENTER"/>
    <property type="match status" value="1"/>
</dbReference>
<proteinExistence type="evidence at protein level"/>
<evidence type="ECO:0000250" key="1">
    <source>
        <dbReference type="UniProtKB" id="P56761"/>
    </source>
</evidence>
<evidence type="ECO:0000255" key="2">
    <source>
        <dbReference type="HAMAP-Rule" id="MF_01383"/>
    </source>
</evidence>
<evidence type="ECO:0000269" key="3">
    <source ref="1"/>
</evidence>